<proteinExistence type="inferred from homology"/>
<sequence>MAITAQDINKLRQLTGAGMMDCKKALTEAQGDIDKAIELLRKKGQKIAAARAGRDTTEGFALADVNASADHGAIIALGCETDFVAKNDLFQQIAQQILSLALAQQPATIEDLKQLEIDGLTVQERITELVGKMGENITLSAYETLSAEVVVPYIHTGNKLAVLVALQGAKGEDVVVAGKDVAMQIAALNPIAIDKDGVFTSVIEQELAIAREQAIREGKPEAMLENIAQGRLNKFFKENTLANQPFVKDNTLTVAQYLTKIAAGLVVKNFKRVLVGA</sequence>
<gene>
    <name evidence="1" type="primary">tsf</name>
    <name type="ordered locus">Aasi_0049</name>
</gene>
<feature type="chain" id="PRO_1000117553" description="Elongation factor Ts">
    <location>
        <begin position="1"/>
        <end position="277"/>
    </location>
</feature>
<feature type="region of interest" description="Involved in Mg(2+) ion dislocation from EF-Tu" evidence="1">
    <location>
        <begin position="81"/>
        <end position="84"/>
    </location>
</feature>
<comment type="function">
    <text evidence="1">Associates with the EF-Tu.GDP complex and induces the exchange of GDP to GTP. It remains bound to the aminoacyl-tRNA.EF-Tu.GTP complex up to the GTP hydrolysis stage on the ribosome.</text>
</comment>
<comment type="subcellular location">
    <subcellularLocation>
        <location evidence="1">Cytoplasm</location>
    </subcellularLocation>
</comment>
<comment type="similarity">
    <text evidence="1">Belongs to the EF-Ts family.</text>
</comment>
<name>EFTS_AMOA5</name>
<organism>
    <name type="scientific">Amoebophilus asiaticus (strain 5a2)</name>
    <dbReference type="NCBI Taxonomy" id="452471"/>
    <lineage>
        <taxon>Bacteria</taxon>
        <taxon>Pseudomonadati</taxon>
        <taxon>Bacteroidota</taxon>
        <taxon>Cytophagia</taxon>
        <taxon>Cytophagales</taxon>
        <taxon>Amoebophilaceae</taxon>
        <taxon>Candidatus Amoebophilus</taxon>
    </lineage>
</organism>
<reference key="1">
    <citation type="journal article" date="2010" name="J. Bacteriol.">
        <title>The genome of the amoeba symbiont 'Candidatus Amoebophilus asiaticus' reveals common mechanisms for host cell interaction among amoeba-associated bacteria.</title>
        <authorList>
            <person name="Schmitz-Esser S."/>
            <person name="Tischler P."/>
            <person name="Arnold R."/>
            <person name="Montanaro J."/>
            <person name="Wagner M."/>
            <person name="Rattei T."/>
            <person name="Horn M."/>
        </authorList>
    </citation>
    <scope>NUCLEOTIDE SEQUENCE [LARGE SCALE GENOMIC DNA]</scope>
    <source>
        <strain>5a2</strain>
    </source>
</reference>
<dbReference type="EMBL" id="CP001102">
    <property type="protein sequence ID" value="ACE05502.1"/>
    <property type="molecule type" value="Genomic_DNA"/>
</dbReference>
<dbReference type="RefSeq" id="WP_012472274.1">
    <property type="nucleotide sequence ID" value="NC_010830.1"/>
</dbReference>
<dbReference type="SMR" id="B3EU83"/>
<dbReference type="STRING" id="452471.Aasi_0049"/>
<dbReference type="KEGG" id="aas:Aasi_0049"/>
<dbReference type="eggNOG" id="COG0264">
    <property type="taxonomic scope" value="Bacteria"/>
</dbReference>
<dbReference type="HOGENOM" id="CLU_047155_0_0_10"/>
<dbReference type="OrthoDB" id="9808348at2"/>
<dbReference type="Proteomes" id="UP000001227">
    <property type="component" value="Chromosome"/>
</dbReference>
<dbReference type="GO" id="GO:0005737">
    <property type="term" value="C:cytoplasm"/>
    <property type="evidence" value="ECO:0007669"/>
    <property type="project" value="UniProtKB-SubCell"/>
</dbReference>
<dbReference type="GO" id="GO:0003746">
    <property type="term" value="F:translation elongation factor activity"/>
    <property type="evidence" value="ECO:0007669"/>
    <property type="project" value="UniProtKB-UniRule"/>
</dbReference>
<dbReference type="CDD" id="cd14275">
    <property type="entry name" value="UBA_EF-Ts"/>
    <property type="match status" value="1"/>
</dbReference>
<dbReference type="FunFam" id="1.10.8.10:FF:000001">
    <property type="entry name" value="Elongation factor Ts"/>
    <property type="match status" value="1"/>
</dbReference>
<dbReference type="Gene3D" id="1.10.286.20">
    <property type="match status" value="1"/>
</dbReference>
<dbReference type="Gene3D" id="1.10.8.10">
    <property type="entry name" value="DNA helicase RuvA subunit, C-terminal domain"/>
    <property type="match status" value="1"/>
</dbReference>
<dbReference type="Gene3D" id="3.30.479.20">
    <property type="entry name" value="Elongation factor Ts, dimerisation domain"/>
    <property type="match status" value="2"/>
</dbReference>
<dbReference type="HAMAP" id="MF_00050">
    <property type="entry name" value="EF_Ts"/>
    <property type="match status" value="1"/>
</dbReference>
<dbReference type="InterPro" id="IPR036402">
    <property type="entry name" value="EF-Ts_dimer_sf"/>
</dbReference>
<dbReference type="InterPro" id="IPR001816">
    <property type="entry name" value="Transl_elong_EFTs/EF1B"/>
</dbReference>
<dbReference type="InterPro" id="IPR014039">
    <property type="entry name" value="Transl_elong_EFTs/EF1B_dimer"/>
</dbReference>
<dbReference type="InterPro" id="IPR018101">
    <property type="entry name" value="Transl_elong_Ts_CS"/>
</dbReference>
<dbReference type="InterPro" id="IPR009060">
    <property type="entry name" value="UBA-like_sf"/>
</dbReference>
<dbReference type="NCBIfam" id="TIGR00116">
    <property type="entry name" value="tsf"/>
    <property type="match status" value="1"/>
</dbReference>
<dbReference type="PANTHER" id="PTHR11741">
    <property type="entry name" value="ELONGATION FACTOR TS"/>
    <property type="match status" value="1"/>
</dbReference>
<dbReference type="PANTHER" id="PTHR11741:SF0">
    <property type="entry name" value="ELONGATION FACTOR TS, MITOCHONDRIAL"/>
    <property type="match status" value="1"/>
</dbReference>
<dbReference type="Pfam" id="PF00889">
    <property type="entry name" value="EF_TS"/>
    <property type="match status" value="1"/>
</dbReference>
<dbReference type="SUPFAM" id="SSF54713">
    <property type="entry name" value="Elongation factor Ts (EF-Ts), dimerisation domain"/>
    <property type="match status" value="2"/>
</dbReference>
<dbReference type="SUPFAM" id="SSF46934">
    <property type="entry name" value="UBA-like"/>
    <property type="match status" value="1"/>
</dbReference>
<dbReference type="PROSITE" id="PS01126">
    <property type="entry name" value="EF_TS_1"/>
    <property type="match status" value="1"/>
</dbReference>
<dbReference type="PROSITE" id="PS01127">
    <property type="entry name" value="EF_TS_2"/>
    <property type="match status" value="1"/>
</dbReference>
<evidence type="ECO:0000255" key="1">
    <source>
        <dbReference type="HAMAP-Rule" id="MF_00050"/>
    </source>
</evidence>
<accession>B3EU83</accession>
<keyword id="KW-0963">Cytoplasm</keyword>
<keyword id="KW-0251">Elongation factor</keyword>
<keyword id="KW-0648">Protein biosynthesis</keyword>
<keyword id="KW-1185">Reference proteome</keyword>
<protein>
    <recommendedName>
        <fullName evidence="1">Elongation factor Ts</fullName>
        <shortName evidence="1">EF-Ts</shortName>
    </recommendedName>
</protein>